<accession>Q2YTB9</accession>
<feature type="chain" id="PRO_0000304276" description="Porphobilinogen deaminase">
    <location>
        <begin position="1"/>
        <end position="308"/>
    </location>
</feature>
<feature type="modified residue" description="S-(dipyrrolylmethanemethyl)cysteine" evidence="1">
    <location>
        <position position="241"/>
    </location>
</feature>
<evidence type="ECO:0000255" key="1">
    <source>
        <dbReference type="HAMAP-Rule" id="MF_00260"/>
    </source>
</evidence>
<gene>
    <name evidence="1" type="primary">hemC</name>
    <name type="ordered locus">SAB1530c</name>
</gene>
<protein>
    <recommendedName>
        <fullName evidence="1">Porphobilinogen deaminase</fullName>
        <shortName evidence="1">PBG</shortName>
        <ecNumber evidence="1">2.5.1.61</ecNumber>
    </recommendedName>
    <alternativeName>
        <fullName evidence="1">Hydroxymethylbilane synthase</fullName>
        <shortName evidence="1">HMBS</shortName>
    </alternativeName>
    <alternativeName>
        <fullName evidence="1">Pre-uroporphyrinogen synthase</fullName>
    </alternativeName>
</protein>
<dbReference type="EC" id="2.5.1.61" evidence="1"/>
<dbReference type="EMBL" id="AJ938182">
    <property type="protein sequence ID" value="CAI81219.1"/>
    <property type="molecule type" value="Genomic_DNA"/>
</dbReference>
<dbReference type="RefSeq" id="WP_001230219.1">
    <property type="nucleotide sequence ID" value="NC_007622.1"/>
</dbReference>
<dbReference type="SMR" id="Q2YTB9"/>
<dbReference type="KEGG" id="sab:SAB1530c"/>
<dbReference type="HOGENOM" id="CLU_019704_0_2_9"/>
<dbReference type="UniPathway" id="UPA00251">
    <property type="reaction ID" value="UER00319"/>
</dbReference>
<dbReference type="GO" id="GO:0005737">
    <property type="term" value="C:cytoplasm"/>
    <property type="evidence" value="ECO:0007669"/>
    <property type="project" value="TreeGrafter"/>
</dbReference>
<dbReference type="GO" id="GO:0004418">
    <property type="term" value="F:hydroxymethylbilane synthase activity"/>
    <property type="evidence" value="ECO:0007669"/>
    <property type="project" value="UniProtKB-UniRule"/>
</dbReference>
<dbReference type="GO" id="GO:0006782">
    <property type="term" value="P:protoporphyrinogen IX biosynthetic process"/>
    <property type="evidence" value="ECO:0007669"/>
    <property type="project" value="UniProtKB-UniRule"/>
</dbReference>
<dbReference type="CDD" id="cd13646">
    <property type="entry name" value="PBP2_EcHMBS_like"/>
    <property type="match status" value="1"/>
</dbReference>
<dbReference type="FunFam" id="3.30.160.40:FF:000001">
    <property type="entry name" value="Porphobilinogen deaminase"/>
    <property type="match status" value="1"/>
</dbReference>
<dbReference type="FunFam" id="3.40.190.10:FF:000004">
    <property type="entry name" value="Porphobilinogen deaminase"/>
    <property type="match status" value="1"/>
</dbReference>
<dbReference type="FunFam" id="3.40.190.10:FF:000005">
    <property type="entry name" value="Porphobilinogen deaminase"/>
    <property type="match status" value="1"/>
</dbReference>
<dbReference type="Gene3D" id="3.40.190.10">
    <property type="entry name" value="Periplasmic binding protein-like II"/>
    <property type="match status" value="2"/>
</dbReference>
<dbReference type="Gene3D" id="3.30.160.40">
    <property type="entry name" value="Porphobilinogen deaminase, C-terminal domain"/>
    <property type="match status" value="1"/>
</dbReference>
<dbReference type="HAMAP" id="MF_00260">
    <property type="entry name" value="Porphobil_deam"/>
    <property type="match status" value="1"/>
</dbReference>
<dbReference type="InterPro" id="IPR000860">
    <property type="entry name" value="HemC"/>
</dbReference>
<dbReference type="InterPro" id="IPR022419">
    <property type="entry name" value="Porphobilin_deaminase_cofac_BS"/>
</dbReference>
<dbReference type="InterPro" id="IPR022417">
    <property type="entry name" value="Porphobilin_deaminase_N"/>
</dbReference>
<dbReference type="InterPro" id="IPR022418">
    <property type="entry name" value="Porphobilinogen_deaminase_C"/>
</dbReference>
<dbReference type="InterPro" id="IPR036803">
    <property type="entry name" value="Porphobilinogen_deaminase_C_sf"/>
</dbReference>
<dbReference type="NCBIfam" id="TIGR00212">
    <property type="entry name" value="hemC"/>
    <property type="match status" value="1"/>
</dbReference>
<dbReference type="PANTHER" id="PTHR11557">
    <property type="entry name" value="PORPHOBILINOGEN DEAMINASE"/>
    <property type="match status" value="1"/>
</dbReference>
<dbReference type="PANTHER" id="PTHR11557:SF0">
    <property type="entry name" value="PORPHOBILINOGEN DEAMINASE"/>
    <property type="match status" value="1"/>
</dbReference>
<dbReference type="Pfam" id="PF01379">
    <property type="entry name" value="Porphobil_deam"/>
    <property type="match status" value="1"/>
</dbReference>
<dbReference type="Pfam" id="PF03900">
    <property type="entry name" value="Porphobil_deamC"/>
    <property type="match status" value="1"/>
</dbReference>
<dbReference type="PIRSF" id="PIRSF001438">
    <property type="entry name" value="4pyrrol_synth_OHMeBilane_synth"/>
    <property type="match status" value="1"/>
</dbReference>
<dbReference type="PRINTS" id="PR00151">
    <property type="entry name" value="PORPHBDMNASE"/>
</dbReference>
<dbReference type="SUPFAM" id="SSF53850">
    <property type="entry name" value="Periplasmic binding protein-like II"/>
    <property type="match status" value="1"/>
</dbReference>
<dbReference type="SUPFAM" id="SSF54782">
    <property type="entry name" value="Porphobilinogen deaminase (hydroxymethylbilane synthase), C-terminal domain"/>
    <property type="match status" value="1"/>
</dbReference>
<dbReference type="PROSITE" id="PS00533">
    <property type="entry name" value="PORPHOBILINOGEN_DEAM"/>
    <property type="match status" value="1"/>
</dbReference>
<reference key="1">
    <citation type="journal article" date="2007" name="PLoS ONE">
        <title>Molecular correlates of host specialization in Staphylococcus aureus.</title>
        <authorList>
            <person name="Herron-Olson L."/>
            <person name="Fitzgerald J.R."/>
            <person name="Musser J.M."/>
            <person name="Kapur V."/>
        </authorList>
    </citation>
    <scope>NUCLEOTIDE SEQUENCE [LARGE SCALE GENOMIC DNA]</scope>
    <source>
        <strain>bovine RF122 / ET3-1</strain>
    </source>
</reference>
<name>HEM3_STAAB</name>
<comment type="function">
    <text evidence="1">Tetrapolymerization of the monopyrrole PBG into the hydroxymethylbilane pre-uroporphyrinogen in several discrete steps.</text>
</comment>
<comment type="catalytic activity">
    <reaction evidence="1">
        <text>4 porphobilinogen + H2O = hydroxymethylbilane + 4 NH4(+)</text>
        <dbReference type="Rhea" id="RHEA:13185"/>
        <dbReference type="ChEBI" id="CHEBI:15377"/>
        <dbReference type="ChEBI" id="CHEBI:28938"/>
        <dbReference type="ChEBI" id="CHEBI:57845"/>
        <dbReference type="ChEBI" id="CHEBI:58126"/>
        <dbReference type="EC" id="2.5.1.61"/>
    </reaction>
</comment>
<comment type="cofactor">
    <cofactor evidence="1">
        <name>dipyrromethane</name>
        <dbReference type="ChEBI" id="CHEBI:60342"/>
    </cofactor>
    <text evidence="1">Binds 1 dipyrromethane group covalently.</text>
</comment>
<comment type="pathway">
    <text evidence="1">Porphyrin-containing compound metabolism; protoporphyrin-IX biosynthesis; coproporphyrinogen-III from 5-aminolevulinate: step 2/4.</text>
</comment>
<comment type="subunit">
    <text evidence="1">Monomer.</text>
</comment>
<comment type="miscellaneous">
    <text evidence="1">The porphobilinogen subunits are added to the dipyrromethane group.</text>
</comment>
<comment type="similarity">
    <text evidence="1">Belongs to the HMBS family.</text>
</comment>
<proteinExistence type="inferred from homology"/>
<keyword id="KW-0627">Porphyrin biosynthesis</keyword>
<keyword id="KW-0808">Transferase</keyword>
<sequence length="308" mass="34352">MRKLVVGSRRSKLALTQSQQFIDKLKAVEPNLEIEIKEIVTKGDRIVDKQLSKVGGKGLFVKEIQHELFEKNIDMAIHSLKDVPSVIPEGLTLGCIPDRELPFDAYISKTHTPLSQLPEGSIIGTSSLRRGAQILSKYPNLEIKWIRGNIDTRLEKLQTEDYDAIILAAAGLRRMGWSDDIVTSYLDIDTLLPAIGQGALGIECRSDDEELLTLLSKVHNDEVAKCVTAERTFLAEMDGSCQVPIAGYATISDQKEIEFTGLIMTPDGKERFEYTMNGTDPVELGKKVSNKLKEQGAYEIIKRLNEQH</sequence>
<organism>
    <name type="scientific">Staphylococcus aureus (strain bovine RF122 / ET3-1)</name>
    <dbReference type="NCBI Taxonomy" id="273036"/>
    <lineage>
        <taxon>Bacteria</taxon>
        <taxon>Bacillati</taxon>
        <taxon>Bacillota</taxon>
        <taxon>Bacilli</taxon>
        <taxon>Bacillales</taxon>
        <taxon>Staphylococcaceae</taxon>
        <taxon>Staphylococcus</taxon>
    </lineage>
</organism>